<sequence>MRRESDCAEEKAPAKGEGGAEGTVRARKRKADVATFLQDPDEEIAKIEMSRKKQYENQLSWNNINKDPHMLIPTPDKDDDPVGVDYSHFIHLNVASTRSSPLPILGWANRDDVWKNMINKEETYVRDKLYMQRHPLLQPKMRTILLDWLMEVCEVYKLYRETFYLAQDFFDRFMATQQNVVKTLLQLIGISSLFIAAKLEEIYPPKLHQFAYVTDGACTEDEILSMELIIMKALNWNLNPLTVVSWLNIYMQVAYLNELYEVLLPQYPQQIFVQIAELLDLCVLDIGCLEYTYGVLAASALYHFSSSELMQKVSGYEWCEIEECVKWMVPFAMAIREVGSSKLKHFRGIAPEDLHNIQTHINSLDLLDKAQAKQAILAEQNRTSPFPTGVLTPPQSSKKQPAGLKPI</sequence>
<comment type="function">
    <text>Essential for the control of the cell cycle at the G1/S (start) transition.</text>
</comment>
<comment type="subunit">
    <text evidence="1">Interacts with CDK2 protein kinase to form a serine/threonine kinase holoenzyme complex. The cyclin subunit imparts substrate specificity to the complex (By similarity).</text>
</comment>
<comment type="subcellular location">
    <subcellularLocation>
        <location evidence="1">Nucleus</location>
    </subcellularLocation>
</comment>
<comment type="PTM">
    <text evidence="1">Phosphorylation by CDK2 triggers its release from CDK2 and degradation via the ubiquitin proteasome pathway.</text>
</comment>
<comment type="similarity">
    <text evidence="3">Belongs to the cyclin family. Cyclin E subfamily.</text>
</comment>
<accession>P49707</accession>
<accession>Q91032</accession>
<keyword id="KW-0131">Cell cycle</keyword>
<keyword id="KW-0132">Cell division</keyword>
<keyword id="KW-0195">Cyclin</keyword>
<keyword id="KW-0539">Nucleus</keyword>
<keyword id="KW-0597">Phosphoprotein</keyword>
<keyword id="KW-1185">Reference proteome</keyword>
<dbReference type="EMBL" id="U28981">
    <property type="protein sequence ID" value="AAA74981.1"/>
    <property type="molecule type" value="mRNA"/>
</dbReference>
<dbReference type="EMBL" id="AH003231">
    <property type="protein sequence ID" value="AAA81647.1"/>
    <property type="molecule type" value="Genomic_DNA"/>
</dbReference>
<dbReference type="RefSeq" id="NP_001026529.1">
    <property type="nucleotide sequence ID" value="NM_001031358.1"/>
</dbReference>
<dbReference type="SMR" id="P49707"/>
<dbReference type="FunCoup" id="P49707">
    <property type="interactions" value="619"/>
</dbReference>
<dbReference type="STRING" id="9031.ENSGALP00000007147"/>
<dbReference type="PaxDb" id="9031-ENSGALP00000007147"/>
<dbReference type="GeneID" id="426117"/>
<dbReference type="KEGG" id="gga:426117"/>
<dbReference type="CTD" id="898"/>
<dbReference type="VEuPathDB" id="HostDB:geneid_426117"/>
<dbReference type="eggNOG" id="KOG0655">
    <property type="taxonomic scope" value="Eukaryota"/>
</dbReference>
<dbReference type="InParanoid" id="P49707"/>
<dbReference type="OrthoDB" id="5590282at2759"/>
<dbReference type="PhylomeDB" id="P49707"/>
<dbReference type="PRO" id="PR:P49707"/>
<dbReference type="Proteomes" id="UP000000539">
    <property type="component" value="Unassembled WGS sequence"/>
</dbReference>
<dbReference type="GO" id="GO:0097134">
    <property type="term" value="C:cyclin E1-CDK2 complex"/>
    <property type="evidence" value="ECO:0000318"/>
    <property type="project" value="GO_Central"/>
</dbReference>
<dbReference type="GO" id="GO:0005737">
    <property type="term" value="C:cytoplasm"/>
    <property type="evidence" value="ECO:0000318"/>
    <property type="project" value="GO_Central"/>
</dbReference>
<dbReference type="GO" id="GO:0005815">
    <property type="term" value="C:microtubule organizing center"/>
    <property type="evidence" value="ECO:0000318"/>
    <property type="project" value="GO_Central"/>
</dbReference>
<dbReference type="GO" id="GO:0005634">
    <property type="term" value="C:nucleus"/>
    <property type="evidence" value="ECO:0000318"/>
    <property type="project" value="GO_Central"/>
</dbReference>
<dbReference type="GO" id="GO:0016538">
    <property type="term" value="F:cyclin-dependent protein serine/threonine kinase regulator activity"/>
    <property type="evidence" value="ECO:0000318"/>
    <property type="project" value="GO_Central"/>
</dbReference>
<dbReference type="GO" id="GO:0051301">
    <property type="term" value="P:cell division"/>
    <property type="evidence" value="ECO:0007669"/>
    <property type="project" value="UniProtKB-KW"/>
</dbReference>
<dbReference type="GO" id="GO:0000082">
    <property type="term" value="P:G1/S transition of mitotic cell cycle"/>
    <property type="evidence" value="ECO:0000318"/>
    <property type="project" value="GO_Central"/>
</dbReference>
<dbReference type="GO" id="GO:1900087">
    <property type="term" value="P:positive regulation of G1/S transition of mitotic cell cycle"/>
    <property type="evidence" value="ECO:0000318"/>
    <property type="project" value="GO_Central"/>
</dbReference>
<dbReference type="CDD" id="cd20579">
    <property type="entry name" value="CYCLIN_CCNE1_rpt1"/>
    <property type="match status" value="1"/>
</dbReference>
<dbReference type="CDD" id="cd20581">
    <property type="entry name" value="CYCLIN_CCNE1_rpt2"/>
    <property type="match status" value="1"/>
</dbReference>
<dbReference type="FunFam" id="1.10.472.10:FF:000024">
    <property type="entry name" value="G1/S-specific cyclin-E1"/>
    <property type="match status" value="1"/>
</dbReference>
<dbReference type="Gene3D" id="1.10.472.10">
    <property type="entry name" value="Cyclin-like"/>
    <property type="match status" value="2"/>
</dbReference>
<dbReference type="InterPro" id="IPR039361">
    <property type="entry name" value="Cyclin"/>
</dbReference>
<dbReference type="InterPro" id="IPR013763">
    <property type="entry name" value="Cyclin-like_dom"/>
</dbReference>
<dbReference type="InterPro" id="IPR036915">
    <property type="entry name" value="Cyclin-like_sf"/>
</dbReference>
<dbReference type="InterPro" id="IPR004367">
    <property type="entry name" value="Cyclin_C-dom"/>
</dbReference>
<dbReference type="InterPro" id="IPR006671">
    <property type="entry name" value="Cyclin_N"/>
</dbReference>
<dbReference type="InterPro" id="IPR048258">
    <property type="entry name" value="Cyclins_cyclin-box"/>
</dbReference>
<dbReference type="PANTHER" id="PTHR10177">
    <property type="entry name" value="CYCLINS"/>
    <property type="match status" value="1"/>
</dbReference>
<dbReference type="Pfam" id="PF02984">
    <property type="entry name" value="Cyclin_C"/>
    <property type="match status" value="1"/>
</dbReference>
<dbReference type="Pfam" id="PF00134">
    <property type="entry name" value="Cyclin_N"/>
    <property type="match status" value="1"/>
</dbReference>
<dbReference type="SMART" id="SM00385">
    <property type="entry name" value="CYCLIN"/>
    <property type="match status" value="1"/>
</dbReference>
<dbReference type="SMART" id="SM01332">
    <property type="entry name" value="Cyclin_C"/>
    <property type="match status" value="1"/>
</dbReference>
<dbReference type="SUPFAM" id="SSF47954">
    <property type="entry name" value="Cyclin-like"/>
    <property type="match status" value="2"/>
</dbReference>
<dbReference type="PROSITE" id="PS00292">
    <property type="entry name" value="CYCLINS"/>
    <property type="match status" value="1"/>
</dbReference>
<organism>
    <name type="scientific">Gallus gallus</name>
    <name type="common">Chicken</name>
    <dbReference type="NCBI Taxonomy" id="9031"/>
    <lineage>
        <taxon>Eukaryota</taxon>
        <taxon>Metazoa</taxon>
        <taxon>Chordata</taxon>
        <taxon>Craniata</taxon>
        <taxon>Vertebrata</taxon>
        <taxon>Euteleostomi</taxon>
        <taxon>Archelosauria</taxon>
        <taxon>Archosauria</taxon>
        <taxon>Dinosauria</taxon>
        <taxon>Saurischia</taxon>
        <taxon>Theropoda</taxon>
        <taxon>Coelurosauria</taxon>
        <taxon>Aves</taxon>
        <taxon>Neognathae</taxon>
        <taxon>Galloanserae</taxon>
        <taxon>Galliformes</taxon>
        <taxon>Phasianidae</taxon>
        <taxon>Phasianinae</taxon>
        <taxon>Gallus</taxon>
    </lineage>
</organism>
<feature type="chain" id="PRO_0000080452" description="G1/S-specific cyclin-E1">
    <location>
        <begin position="1"/>
        <end position="407"/>
    </location>
</feature>
<feature type="region of interest" description="Disordered" evidence="2">
    <location>
        <begin position="1"/>
        <end position="29"/>
    </location>
</feature>
<feature type="region of interest" description="Disordered" evidence="2">
    <location>
        <begin position="383"/>
        <end position="407"/>
    </location>
</feature>
<feature type="compositionally biased region" description="Basic and acidic residues" evidence="2">
    <location>
        <begin position="1"/>
        <end position="14"/>
    </location>
</feature>
<feature type="modified residue" description="Phosphothreonine" evidence="1">
    <location>
        <position position="392"/>
    </location>
</feature>
<feature type="sequence conflict" description="In Ref. 1; AAA81647." evidence="3" ref="1">
    <original>G</original>
    <variation>GD</variation>
    <location>
        <position position="106"/>
    </location>
</feature>
<feature type="sequence conflict" description="In Ref. 1; AAA81647." evidence="3" ref="1">
    <original>L</original>
    <variation>S</variation>
    <location>
        <position position="343"/>
    </location>
</feature>
<proteinExistence type="evidence at transcript level"/>
<gene>
    <name type="primary">CCNE1</name>
    <name type="synonym">CCNE</name>
</gene>
<name>CCNE1_CHICK</name>
<protein>
    <recommendedName>
        <fullName>G1/S-specific cyclin-E1</fullName>
    </recommendedName>
</protein>
<evidence type="ECO:0000250" key="1">
    <source>
        <dbReference type="UniProtKB" id="P24864"/>
    </source>
</evidence>
<evidence type="ECO:0000256" key="2">
    <source>
        <dbReference type="SAM" id="MobiDB-lite"/>
    </source>
</evidence>
<evidence type="ECO:0000305" key="3"/>
<reference key="1">
    <citation type="submission" date="1995-06" db="EMBL/GenBank/DDBJ databases">
        <title>The cyclin E gene is apparently essential in avian B cells.</title>
        <authorList>
            <person name="Li H."/>
            <person name="Lahti J.M."/>
            <person name="Valentine M."/>
            <person name="Houston J."/>
            <person name="Kidd V.J."/>
        </authorList>
    </citation>
    <scope>NUCLEOTIDE SEQUENCE [GENOMIC DNA / MRNA]</scope>
</reference>